<organism>
    <name type="scientific">Shewanella sediminis (strain HAW-EB3)</name>
    <dbReference type="NCBI Taxonomy" id="425104"/>
    <lineage>
        <taxon>Bacteria</taxon>
        <taxon>Pseudomonadati</taxon>
        <taxon>Pseudomonadota</taxon>
        <taxon>Gammaproteobacteria</taxon>
        <taxon>Alteromonadales</taxon>
        <taxon>Shewanellaceae</taxon>
        <taxon>Shewanella</taxon>
    </lineage>
</organism>
<keyword id="KW-0067">ATP-binding</keyword>
<keyword id="KW-0963">Cytoplasm</keyword>
<keyword id="KW-0235">DNA replication</keyword>
<keyword id="KW-0238">DNA-binding</keyword>
<keyword id="KW-0446">Lipid-binding</keyword>
<keyword id="KW-0547">Nucleotide-binding</keyword>
<keyword id="KW-1185">Reference proteome</keyword>
<feature type="chain" id="PRO_1000079964" description="Chromosomal replication initiator protein DnaA">
    <location>
        <begin position="1"/>
        <end position="462"/>
    </location>
</feature>
<feature type="region of interest" description="Domain I, interacts with DnaA modulators" evidence="1">
    <location>
        <begin position="1"/>
        <end position="84"/>
    </location>
</feature>
<feature type="region of interest" description="Domain II" evidence="1">
    <location>
        <begin position="84"/>
        <end position="125"/>
    </location>
</feature>
<feature type="region of interest" description="Domain III, AAA+ region" evidence="1">
    <location>
        <begin position="126"/>
        <end position="342"/>
    </location>
</feature>
<feature type="region of interest" description="Domain IV, binds dsDNA" evidence="1">
    <location>
        <begin position="343"/>
        <end position="462"/>
    </location>
</feature>
<feature type="binding site" evidence="1">
    <location>
        <position position="170"/>
    </location>
    <ligand>
        <name>ATP</name>
        <dbReference type="ChEBI" id="CHEBI:30616"/>
    </ligand>
</feature>
<feature type="binding site" evidence="1">
    <location>
        <position position="172"/>
    </location>
    <ligand>
        <name>ATP</name>
        <dbReference type="ChEBI" id="CHEBI:30616"/>
    </ligand>
</feature>
<feature type="binding site" evidence="1">
    <location>
        <position position="173"/>
    </location>
    <ligand>
        <name>ATP</name>
        <dbReference type="ChEBI" id="CHEBI:30616"/>
    </ligand>
</feature>
<feature type="binding site" evidence="1">
    <location>
        <position position="174"/>
    </location>
    <ligand>
        <name>ATP</name>
        <dbReference type="ChEBI" id="CHEBI:30616"/>
    </ligand>
</feature>
<accession>A8FP46</accession>
<proteinExistence type="inferred from homology"/>
<protein>
    <recommendedName>
        <fullName evidence="1">Chromosomal replication initiator protein DnaA</fullName>
    </recommendedName>
</protein>
<comment type="function">
    <text evidence="1">Plays an essential role in the initiation and regulation of chromosomal replication. ATP-DnaA binds to the origin of replication (oriC) to initiate formation of the DNA replication initiation complex once per cell cycle. Binds the DnaA box (a 9 base pair repeat at the origin) and separates the double-stranded (ds)DNA. Forms a right-handed helical filament on oriC DNA; dsDNA binds to the exterior of the filament while single-stranded (ss)DNA is stabiized in the filament's interior. The ATP-DnaA-oriC complex binds and stabilizes one strand of the AT-rich DNA unwinding element (DUE), permitting loading of DNA polymerase. After initiation quickly degrades to an ADP-DnaA complex that is not apt for DNA replication. Binds acidic phospholipids.</text>
</comment>
<comment type="subunit">
    <text evidence="1">Oligomerizes as a right-handed, spiral filament on DNA at oriC.</text>
</comment>
<comment type="subcellular location">
    <subcellularLocation>
        <location evidence="1">Cytoplasm</location>
    </subcellularLocation>
</comment>
<comment type="domain">
    <text evidence="1">Domain I is involved in oligomerization and binding regulators, domain II is flexibile and of varying length in different bacteria, domain III forms the AAA+ region, while domain IV binds dsDNA.</text>
</comment>
<comment type="similarity">
    <text evidence="1">Belongs to the DnaA family.</text>
</comment>
<gene>
    <name evidence="1" type="primary">dnaA</name>
    <name type="ordered locus">Ssed_0006</name>
</gene>
<sequence length="462" mass="52422">MAVSLWQQCIGRLQDELSAQQFSMWIRPLQAQMDGDTLVLYAPNRFVLDWVRDKYINIINQFFTEQMGSDAPKLRFDIGSRPSAPRPVQATAAVERPKFEQNTKPAKTSFNVNSPEPAMAANHRSNINRTYQFENFVEGKSNQLGKAAAMQVAENPGGAYNPLFLYGGTGLGKTHLLHAVGNGIIKNNPNAKVVYMHSERFVQDMVKALQNNAIEEFKRYYRSVDALFIDDIQFFANKDRSQEEFFHTFNALLEGNHQIILTSDKYPKEIDGVEDRLKSRFGWGLTVAIEPPELETRVAILMRKAQESGINLPDEVAFFIAKRLRSNVRELEGALNRVIANANFTGRPITIDFVREALRDLLALQEKLVTIDNIQKTVAEYYKIKMADMLSKRRSRSVARPRQVAMALSKELTNHSLPEIGDAFGGRDHTTVLHACRKIAQLREESHDTKEDYANLIRTLSS</sequence>
<name>DNAA_SHESH</name>
<reference key="1">
    <citation type="submission" date="2007-08" db="EMBL/GenBank/DDBJ databases">
        <title>Complete sequence of Shewanella sediminis HAW-EB3.</title>
        <authorList>
            <consortium name="US DOE Joint Genome Institute"/>
            <person name="Copeland A."/>
            <person name="Lucas S."/>
            <person name="Lapidus A."/>
            <person name="Barry K."/>
            <person name="Glavina del Rio T."/>
            <person name="Dalin E."/>
            <person name="Tice H."/>
            <person name="Pitluck S."/>
            <person name="Chertkov O."/>
            <person name="Brettin T."/>
            <person name="Bruce D."/>
            <person name="Detter J.C."/>
            <person name="Han C."/>
            <person name="Schmutz J."/>
            <person name="Larimer F."/>
            <person name="Land M."/>
            <person name="Hauser L."/>
            <person name="Kyrpides N."/>
            <person name="Kim E."/>
            <person name="Zhao J.-S."/>
            <person name="Richardson P."/>
        </authorList>
    </citation>
    <scope>NUCLEOTIDE SEQUENCE [LARGE SCALE GENOMIC DNA]</scope>
    <source>
        <strain>HAW-EB3</strain>
    </source>
</reference>
<dbReference type="EMBL" id="CP000821">
    <property type="protein sequence ID" value="ABV34619.1"/>
    <property type="molecule type" value="Genomic_DNA"/>
</dbReference>
<dbReference type="RefSeq" id="WP_012004145.1">
    <property type="nucleotide sequence ID" value="NC_009831.1"/>
</dbReference>
<dbReference type="SMR" id="A8FP46"/>
<dbReference type="STRING" id="425104.Ssed_0006"/>
<dbReference type="KEGG" id="sse:Ssed_0006"/>
<dbReference type="eggNOG" id="COG0593">
    <property type="taxonomic scope" value="Bacteria"/>
</dbReference>
<dbReference type="HOGENOM" id="CLU_026910_0_1_6"/>
<dbReference type="OrthoDB" id="9807019at2"/>
<dbReference type="Proteomes" id="UP000002015">
    <property type="component" value="Chromosome"/>
</dbReference>
<dbReference type="GO" id="GO:0005737">
    <property type="term" value="C:cytoplasm"/>
    <property type="evidence" value="ECO:0007669"/>
    <property type="project" value="UniProtKB-SubCell"/>
</dbReference>
<dbReference type="GO" id="GO:0005886">
    <property type="term" value="C:plasma membrane"/>
    <property type="evidence" value="ECO:0007669"/>
    <property type="project" value="TreeGrafter"/>
</dbReference>
<dbReference type="GO" id="GO:0005524">
    <property type="term" value="F:ATP binding"/>
    <property type="evidence" value="ECO:0007669"/>
    <property type="project" value="UniProtKB-UniRule"/>
</dbReference>
<dbReference type="GO" id="GO:0016887">
    <property type="term" value="F:ATP hydrolysis activity"/>
    <property type="evidence" value="ECO:0007669"/>
    <property type="project" value="InterPro"/>
</dbReference>
<dbReference type="GO" id="GO:0003688">
    <property type="term" value="F:DNA replication origin binding"/>
    <property type="evidence" value="ECO:0007669"/>
    <property type="project" value="UniProtKB-UniRule"/>
</dbReference>
<dbReference type="GO" id="GO:0008289">
    <property type="term" value="F:lipid binding"/>
    <property type="evidence" value="ECO:0007669"/>
    <property type="project" value="UniProtKB-KW"/>
</dbReference>
<dbReference type="GO" id="GO:0006270">
    <property type="term" value="P:DNA replication initiation"/>
    <property type="evidence" value="ECO:0007669"/>
    <property type="project" value="UniProtKB-UniRule"/>
</dbReference>
<dbReference type="GO" id="GO:0006275">
    <property type="term" value="P:regulation of DNA replication"/>
    <property type="evidence" value="ECO:0007669"/>
    <property type="project" value="UniProtKB-UniRule"/>
</dbReference>
<dbReference type="CDD" id="cd00009">
    <property type="entry name" value="AAA"/>
    <property type="match status" value="1"/>
</dbReference>
<dbReference type="CDD" id="cd06571">
    <property type="entry name" value="Bac_DnaA_C"/>
    <property type="match status" value="1"/>
</dbReference>
<dbReference type="FunFam" id="1.10.1750.10:FF:000001">
    <property type="entry name" value="Chromosomal replication initiator protein DnaA"/>
    <property type="match status" value="1"/>
</dbReference>
<dbReference type="FunFam" id="1.10.8.60:FF:000003">
    <property type="entry name" value="Chromosomal replication initiator protein DnaA"/>
    <property type="match status" value="1"/>
</dbReference>
<dbReference type="FunFam" id="3.30.300.180:FF:000001">
    <property type="entry name" value="Chromosomal replication initiator protein DnaA"/>
    <property type="match status" value="1"/>
</dbReference>
<dbReference type="FunFam" id="3.40.50.300:FF:000103">
    <property type="entry name" value="Chromosomal replication initiator protein DnaA"/>
    <property type="match status" value="1"/>
</dbReference>
<dbReference type="Gene3D" id="1.10.1750.10">
    <property type="match status" value="1"/>
</dbReference>
<dbReference type="Gene3D" id="1.10.8.60">
    <property type="match status" value="1"/>
</dbReference>
<dbReference type="Gene3D" id="3.30.300.180">
    <property type="match status" value="1"/>
</dbReference>
<dbReference type="Gene3D" id="3.40.50.300">
    <property type="entry name" value="P-loop containing nucleotide triphosphate hydrolases"/>
    <property type="match status" value="1"/>
</dbReference>
<dbReference type="HAMAP" id="MF_00377">
    <property type="entry name" value="DnaA_bact"/>
    <property type="match status" value="1"/>
</dbReference>
<dbReference type="InterPro" id="IPR003593">
    <property type="entry name" value="AAA+_ATPase"/>
</dbReference>
<dbReference type="InterPro" id="IPR001957">
    <property type="entry name" value="Chromosome_initiator_DnaA"/>
</dbReference>
<dbReference type="InterPro" id="IPR020591">
    <property type="entry name" value="Chromosome_initiator_DnaA-like"/>
</dbReference>
<dbReference type="InterPro" id="IPR018312">
    <property type="entry name" value="Chromosome_initiator_DnaA_CS"/>
</dbReference>
<dbReference type="InterPro" id="IPR013159">
    <property type="entry name" value="DnaA_C"/>
</dbReference>
<dbReference type="InterPro" id="IPR013317">
    <property type="entry name" value="DnaA_dom"/>
</dbReference>
<dbReference type="InterPro" id="IPR024633">
    <property type="entry name" value="DnaA_N_dom"/>
</dbReference>
<dbReference type="InterPro" id="IPR038454">
    <property type="entry name" value="DnaA_N_sf"/>
</dbReference>
<dbReference type="InterPro" id="IPR055199">
    <property type="entry name" value="Hda_lid"/>
</dbReference>
<dbReference type="InterPro" id="IPR027417">
    <property type="entry name" value="P-loop_NTPase"/>
</dbReference>
<dbReference type="InterPro" id="IPR010921">
    <property type="entry name" value="Trp_repressor/repl_initiator"/>
</dbReference>
<dbReference type="NCBIfam" id="TIGR00362">
    <property type="entry name" value="DnaA"/>
    <property type="match status" value="1"/>
</dbReference>
<dbReference type="PANTHER" id="PTHR30050">
    <property type="entry name" value="CHROMOSOMAL REPLICATION INITIATOR PROTEIN DNAA"/>
    <property type="match status" value="1"/>
</dbReference>
<dbReference type="PANTHER" id="PTHR30050:SF2">
    <property type="entry name" value="CHROMOSOMAL REPLICATION INITIATOR PROTEIN DNAA"/>
    <property type="match status" value="1"/>
</dbReference>
<dbReference type="Pfam" id="PF00308">
    <property type="entry name" value="Bac_DnaA"/>
    <property type="match status" value="1"/>
</dbReference>
<dbReference type="Pfam" id="PF08299">
    <property type="entry name" value="Bac_DnaA_C"/>
    <property type="match status" value="1"/>
</dbReference>
<dbReference type="Pfam" id="PF11638">
    <property type="entry name" value="DnaA_N"/>
    <property type="match status" value="1"/>
</dbReference>
<dbReference type="Pfam" id="PF22688">
    <property type="entry name" value="Hda_lid"/>
    <property type="match status" value="1"/>
</dbReference>
<dbReference type="PRINTS" id="PR00051">
    <property type="entry name" value="DNAA"/>
</dbReference>
<dbReference type="SMART" id="SM00382">
    <property type="entry name" value="AAA"/>
    <property type="match status" value="1"/>
</dbReference>
<dbReference type="SMART" id="SM00760">
    <property type="entry name" value="Bac_DnaA_C"/>
    <property type="match status" value="1"/>
</dbReference>
<dbReference type="SUPFAM" id="SSF52540">
    <property type="entry name" value="P-loop containing nucleoside triphosphate hydrolases"/>
    <property type="match status" value="1"/>
</dbReference>
<dbReference type="SUPFAM" id="SSF48295">
    <property type="entry name" value="TrpR-like"/>
    <property type="match status" value="1"/>
</dbReference>
<dbReference type="PROSITE" id="PS01008">
    <property type="entry name" value="DNAA"/>
    <property type="match status" value="1"/>
</dbReference>
<evidence type="ECO:0000255" key="1">
    <source>
        <dbReference type="HAMAP-Rule" id="MF_00377"/>
    </source>
</evidence>